<name>DAPF_METS4</name>
<protein>
    <recommendedName>
        <fullName evidence="1">Diaminopimelate epimerase</fullName>
        <shortName evidence="1">DAP epimerase</shortName>
        <ecNumber evidence="1">5.1.1.7</ecNumber>
    </recommendedName>
    <alternativeName>
        <fullName evidence="1">PLP-independent amino acid racemase</fullName>
    </alternativeName>
</protein>
<sequence>MSPLADHRFLKMNGLGNEIVVLDLRASSHVVRPEEARAIAADPRSRFDQLMVLHDPVTPGTDARLRIYNRDGSESGACGNGTRCVAWAMRADPVMGRAGEQLTLESAAGLLAVTRVSDTDFTVDMGPPHLRWDEIPLSEPFPDTRRIELQIGPIDAPILHSPGVVSMGNPHAVFFVDRDPETYDLGRIGPLLEAHPLFPERANISLAQVVAADRIRLRVWERGAGLTRACGSAACAALVAAARLRLTGRRATVTLPGGDLVIAWGEDDHVRMTGPTELEWEGRFPPALFAGAA</sequence>
<reference key="1">
    <citation type="submission" date="2008-02" db="EMBL/GenBank/DDBJ databases">
        <title>Complete sequence of chromosome of Methylobacterium sp. 4-46.</title>
        <authorList>
            <consortium name="US DOE Joint Genome Institute"/>
            <person name="Copeland A."/>
            <person name="Lucas S."/>
            <person name="Lapidus A."/>
            <person name="Glavina del Rio T."/>
            <person name="Dalin E."/>
            <person name="Tice H."/>
            <person name="Bruce D."/>
            <person name="Goodwin L."/>
            <person name="Pitluck S."/>
            <person name="Chertkov O."/>
            <person name="Brettin T."/>
            <person name="Detter J.C."/>
            <person name="Han C."/>
            <person name="Kuske C.R."/>
            <person name="Schmutz J."/>
            <person name="Larimer F."/>
            <person name="Land M."/>
            <person name="Hauser L."/>
            <person name="Kyrpides N."/>
            <person name="Ivanova N."/>
            <person name="Marx C.J."/>
            <person name="Richardson P."/>
        </authorList>
    </citation>
    <scope>NUCLEOTIDE SEQUENCE [LARGE SCALE GENOMIC DNA]</scope>
    <source>
        <strain>4-46</strain>
    </source>
</reference>
<gene>
    <name evidence="1" type="primary">dapF</name>
    <name type="ordered locus">M446_3656</name>
</gene>
<organism>
    <name type="scientific">Methylobacterium sp. (strain 4-46)</name>
    <dbReference type="NCBI Taxonomy" id="426117"/>
    <lineage>
        <taxon>Bacteria</taxon>
        <taxon>Pseudomonadati</taxon>
        <taxon>Pseudomonadota</taxon>
        <taxon>Alphaproteobacteria</taxon>
        <taxon>Hyphomicrobiales</taxon>
        <taxon>Methylobacteriaceae</taxon>
        <taxon>Methylobacterium</taxon>
    </lineage>
</organism>
<proteinExistence type="inferred from homology"/>
<dbReference type="EC" id="5.1.1.7" evidence="1"/>
<dbReference type="EMBL" id="CP000943">
    <property type="protein sequence ID" value="ACA18037.1"/>
    <property type="molecule type" value="Genomic_DNA"/>
</dbReference>
<dbReference type="RefSeq" id="WP_012333436.1">
    <property type="nucleotide sequence ID" value="NC_010511.1"/>
</dbReference>
<dbReference type="SMR" id="B0UCI8"/>
<dbReference type="STRING" id="426117.M446_3656"/>
<dbReference type="KEGG" id="met:M446_3656"/>
<dbReference type="eggNOG" id="COG0253">
    <property type="taxonomic scope" value="Bacteria"/>
</dbReference>
<dbReference type="HOGENOM" id="CLU_053306_1_0_5"/>
<dbReference type="UniPathway" id="UPA00034">
    <property type="reaction ID" value="UER00025"/>
</dbReference>
<dbReference type="GO" id="GO:0005829">
    <property type="term" value="C:cytosol"/>
    <property type="evidence" value="ECO:0007669"/>
    <property type="project" value="TreeGrafter"/>
</dbReference>
<dbReference type="GO" id="GO:0008837">
    <property type="term" value="F:diaminopimelate epimerase activity"/>
    <property type="evidence" value="ECO:0007669"/>
    <property type="project" value="UniProtKB-UniRule"/>
</dbReference>
<dbReference type="GO" id="GO:0009089">
    <property type="term" value="P:lysine biosynthetic process via diaminopimelate"/>
    <property type="evidence" value="ECO:0007669"/>
    <property type="project" value="UniProtKB-UniRule"/>
</dbReference>
<dbReference type="Gene3D" id="3.10.310.10">
    <property type="entry name" value="Diaminopimelate Epimerase, Chain A, domain 1"/>
    <property type="match status" value="2"/>
</dbReference>
<dbReference type="HAMAP" id="MF_00197">
    <property type="entry name" value="DAP_epimerase"/>
    <property type="match status" value="1"/>
</dbReference>
<dbReference type="InterPro" id="IPR018510">
    <property type="entry name" value="DAP_epimerase_AS"/>
</dbReference>
<dbReference type="InterPro" id="IPR001653">
    <property type="entry name" value="DAP_epimerase_DapF"/>
</dbReference>
<dbReference type="NCBIfam" id="TIGR00652">
    <property type="entry name" value="DapF"/>
    <property type="match status" value="1"/>
</dbReference>
<dbReference type="PANTHER" id="PTHR31689:SF0">
    <property type="entry name" value="DIAMINOPIMELATE EPIMERASE"/>
    <property type="match status" value="1"/>
</dbReference>
<dbReference type="PANTHER" id="PTHR31689">
    <property type="entry name" value="DIAMINOPIMELATE EPIMERASE, CHLOROPLASTIC"/>
    <property type="match status" value="1"/>
</dbReference>
<dbReference type="Pfam" id="PF01678">
    <property type="entry name" value="DAP_epimerase"/>
    <property type="match status" value="2"/>
</dbReference>
<dbReference type="SUPFAM" id="SSF54506">
    <property type="entry name" value="Diaminopimelate epimerase-like"/>
    <property type="match status" value="2"/>
</dbReference>
<dbReference type="PROSITE" id="PS01326">
    <property type="entry name" value="DAP_EPIMERASE"/>
    <property type="match status" value="1"/>
</dbReference>
<keyword id="KW-0028">Amino-acid biosynthesis</keyword>
<keyword id="KW-0963">Cytoplasm</keyword>
<keyword id="KW-0413">Isomerase</keyword>
<keyword id="KW-0457">Lysine biosynthesis</keyword>
<evidence type="ECO:0000255" key="1">
    <source>
        <dbReference type="HAMAP-Rule" id="MF_00197"/>
    </source>
</evidence>
<feature type="chain" id="PRO_1000099247" description="Diaminopimelate epimerase">
    <location>
        <begin position="1"/>
        <end position="293"/>
    </location>
</feature>
<feature type="active site" description="Proton donor" evidence="1">
    <location>
        <position position="78"/>
    </location>
</feature>
<feature type="active site" description="Proton acceptor" evidence="1">
    <location>
        <position position="230"/>
    </location>
</feature>
<feature type="binding site" evidence="1">
    <location>
        <position position="17"/>
    </location>
    <ligand>
        <name>substrate</name>
    </ligand>
</feature>
<feature type="binding site" evidence="1">
    <location>
        <position position="49"/>
    </location>
    <ligand>
        <name>substrate</name>
    </ligand>
</feature>
<feature type="binding site" evidence="1">
    <location>
        <position position="69"/>
    </location>
    <ligand>
        <name>substrate</name>
    </ligand>
</feature>
<feature type="binding site" evidence="1">
    <location>
        <begin position="79"/>
        <end position="80"/>
    </location>
    <ligand>
        <name>substrate</name>
    </ligand>
</feature>
<feature type="binding site" evidence="1">
    <location>
        <position position="169"/>
    </location>
    <ligand>
        <name>substrate</name>
    </ligand>
</feature>
<feature type="binding site" evidence="1">
    <location>
        <position position="203"/>
    </location>
    <ligand>
        <name>substrate</name>
    </ligand>
</feature>
<feature type="binding site" evidence="1">
    <location>
        <begin position="221"/>
        <end position="222"/>
    </location>
    <ligand>
        <name>substrate</name>
    </ligand>
</feature>
<feature type="binding site" evidence="1">
    <location>
        <begin position="231"/>
        <end position="232"/>
    </location>
    <ligand>
        <name>substrate</name>
    </ligand>
</feature>
<feature type="site" description="Could be important to modulate the pK values of the two catalytic cysteine residues" evidence="1">
    <location>
        <position position="171"/>
    </location>
</feature>
<feature type="site" description="Could be important to modulate the pK values of the two catalytic cysteine residues" evidence="1">
    <location>
        <position position="221"/>
    </location>
</feature>
<comment type="function">
    <text evidence="1">Catalyzes the stereoinversion of LL-2,6-diaminopimelate (L,L-DAP) to meso-diaminopimelate (meso-DAP), a precursor of L-lysine and an essential component of the bacterial peptidoglycan.</text>
</comment>
<comment type="catalytic activity">
    <reaction evidence="1">
        <text>(2S,6S)-2,6-diaminopimelate = meso-2,6-diaminopimelate</text>
        <dbReference type="Rhea" id="RHEA:15393"/>
        <dbReference type="ChEBI" id="CHEBI:57609"/>
        <dbReference type="ChEBI" id="CHEBI:57791"/>
        <dbReference type="EC" id="5.1.1.7"/>
    </reaction>
</comment>
<comment type="pathway">
    <text evidence="1">Amino-acid biosynthesis; L-lysine biosynthesis via DAP pathway; DL-2,6-diaminopimelate from LL-2,6-diaminopimelate: step 1/1.</text>
</comment>
<comment type="subunit">
    <text evidence="1">Homodimer.</text>
</comment>
<comment type="subcellular location">
    <subcellularLocation>
        <location evidence="1">Cytoplasm</location>
    </subcellularLocation>
</comment>
<comment type="similarity">
    <text evidence="1">Belongs to the diaminopimelate epimerase family.</text>
</comment>
<accession>B0UCI8</accession>